<gene>
    <name type="primary">rpmG2</name>
    <name type="synonym">rpmGC</name>
    <name type="ordered locus">LL2106</name>
    <name type="ORF">L74935</name>
</gene>
<reference key="1">
    <citation type="journal article" date="2001" name="Genome Res.">
        <title>The complete genome sequence of the lactic acid bacterium Lactococcus lactis ssp. lactis IL1403.</title>
        <authorList>
            <person name="Bolotin A."/>
            <person name="Wincker P."/>
            <person name="Mauger S."/>
            <person name="Jaillon O."/>
            <person name="Malarme K."/>
            <person name="Weissenbach J."/>
            <person name="Ehrlich S.D."/>
            <person name="Sorokin A."/>
        </authorList>
    </citation>
    <scope>NUCLEOTIDE SEQUENCE [LARGE SCALE GENOMIC DNA]</scope>
    <source>
        <strain>IL1403</strain>
    </source>
</reference>
<dbReference type="EMBL" id="AE005176">
    <property type="protein sequence ID" value="AAK06204.1"/>
    <property type="molecule type" value="Genomic_DNA"/>
</dbReference>
<dbReference type="PIR" id="B86888">
    <property type="entry name" value="B86888"/>
</dbReference>
<dbReference type="RefSeq" id="NP_268263.1">
    <property type="nucleotide sequence ID" value="NC_002662.1"/>
</dbReference>
<dbReference type="SMR" id="Q9CDV5"/>
<dbReference type="PaxDb" id="272623-L74935"/>
<dbReference type="EnsemblBacteria" id="AAK06204">
    <property type="protein sequence ID" value="AAK06204"/>
    <property type="gene ID" value="L74935"/>
</dbReference>
<dbReference type="KEGG" id="lla:L74935"/>
<dbReference type="PATRIC" id="fig|272623.7.peg.2265"/>
<dbReference type="eggNOG" id="COG0267">
    <property type="taxonomic scope" value="Bacteria"/>
</dbReference>
<dbReference type="HOGENOM" id="CLU_190949_0_1_9"/>
<dbReference type="OrthoDB" id="9801333at2"/>
<dbReference type="Proteomes" id="UP000002196">
    <property type="component" value="Chromosome"/>
</dbReference>
<dbReference type="GO" id="GO:0005737">
    <property type="term" value="C:cytoplasm"/>
    <property type="evidence" value="ECO:0007669"/>
    <property type="project" value="UniProtKB-ARBA"/>
</dbReference>
<dbReference type="GO" id="GO:1990904">
    <property type="term" value="C:ribonucleoprotein complex"/>
    <property type="evidence" value="ECO:0007669"/>
    <property type="project" value="UniProtKB-KW"/>
</dbReference>
<dbReference type="GO" id="GO:0005840">
    <property type="term" value="C:ribosome"/>
    <property type="evidence" value="ECO:0007669"/>
    <property type="project" value="UniProtKB-KW"/>
</dbReference>
<dbReference type="GO" id="GO:0003735">
    <property type="term" value="F:structural constituent of ribosome"/>
    <property type="evidence" value="ECO:0007669"/>
    <property type="project" value="InterPro"/>
</dbReference>
<dbReference type="GO" id="GO:0006412">
    <property type="term" value="P:translation"/>
    <property type="evidence" value="ECO:0007669"/>
    <property type="project" value="UniProtKB-UniRule"/>
</dbReference>
<dbReference type="Gene3D" id="2.20.28.120">
    <property type="entry name" value="Ribosomal protein L33"/>
    <property type="match status" value="1"/>
</dbReference>
<dbReference type="HAMAP" id="MF_00294">
    <property type="entry name" value="Ribosomal_bL33"/>
    <property type="match status" value="1"/>
</dbReference>
<dbReference type="InterPro" id="IPR001705">
    <property type="entry name" value="Ribosomal_bL33"/>
</dbReference>
<dbReference type="InterPro" id="IPR038584">
    <property type="entry name" value="Ribosomal_bL33_sf"/>
</dbReference>
<dbReference type="InterPro" id="IPR011332">
    <property type="entry name" value="Ribosomal_zn-bd"/>
</dbReference>
<dbReference type="NCBIfam" id="NF001764">
    <property type="entry name" value="PRK00504.1"/>
    <property type="match status" value="1"/>
</dbReference>
<dbReference type="NCBIfam" id="TIGR01023">
    <property type="entry name" value="rpmG_bact"/>
    <property type="match status" value="1"/>
</dbReference>
<dbReference type="Pfam" id="PF00471">
    <property type="entry name" value="Ribosomal_L33"/>
    <property type="match status" value="1"/>
</dbReference>
<dbReference type="SUPFAM" id="SSF57829">
    <property type="entry name" value="Zn-binding ribosomal proteins"/>
    <property type="match status" value="1"/>
</dbReference>
<feature type="chain" id="PRO_0000170171" description="Large ribosomal subunit protein bL33B">
    <location>
        <begin position="1"/>
        <end position="49"/>
    </location>
</feature>
<protein>
    <recommendedName>
        <fullName evidence="1">Large ribosomal subunit protein bL33B</fullName>
    </recommendedName>
    <alternativeName>
        <fullName>50S ribosomal protein L33 2</fullName>
    </alternativeName>
</protein>
<proteinExistence type="inferred from homology"/>
<sequence length="49" mass="5568">MLRKAGLACTICGSRNYTLNLSSVAKEKRVEVKKFCRTCGKHTLHKETR</sequence>
<name>RL332_LACLA</name>
<accession>Q9CDV5</accession>
<evidence type="ECO:0000255" key="1">
    <source>
        <dbReference type="HAMAP-Rule" id="MF_00294"/>
    </source>
</evidence>
<evidence type="ECO:0000305" key="2"/>
<comment type="similarity">
    <text evidence="2">Belongs to the bacterial ribosomal protein bL33 family.</text>
</comment>
<organism>
    <name type="scientific">Lactococcus lactis subsp. lactis (strain IL1403)</name>
    <name type="common">Streptococcus lactis</name>
    <dbReference type="NCBI Taxonomy" id="272623"/>
    <lineage>
        <taxon>Bacteria</taxon>
        <taxon>Bacillati</taxon>
        <taxon>Bacillota</taxon>
        <taxon>Bacilli</taxon>
        <taxon>Lactobacillales</taxon>
        <taxon>Streptococcaceae</taxon>
        <taxon>Lactococcus</taxon>
    </lineage>
</organism>
<keyword id="KW-1185">Reference proteome</keyword>
<keyword id="KW-0687">Ribonucleoprotein</keyword>
<keyword id="KW-0689">Ribosomal protein</keyword>